<proteinExistence type="evidence at protein level"/>
<evidence type="ECO:0000269" key="1">
    <source>
    </source>
</evidence>
<evidence type="ECO:0000303" key="2">
    <source>
    </source>
</evidence>
<evidence type="ECO:0000305" key="3">
    <source>
    </source>
</evidence>
<accession>P0DRE4</accession>
<dbReference type="GO" id="GO:0005576">
    <property type="term" value="C:extracellular region"/>
    <property type="evidence" value="ECO:0007669"/>
    <property type="project" value="UniProtKB-SubCell"/>
</dbReference>
<sequence length="9" mass="1003">ILTGKLKCK</sequence>
<organism>
    <name type="scientific">Tityus serrulatus</name>
    <name type="common">Brazilian scorpion</name>
    <dbReference type="NCBI Taxonomy" id="6887"/>
    <lineage>
        <taxon>Eukaryota</taxon>
        <taxon>Metazoa</taxon>
        <taxon>Ecdysozoa</taxon>
        <taxon>Arthropoda</taxon>
        <taxon>Chelicerata</taxon>
        <taxon>Arachnida</taxon>
        <taxon>Scorpiones</taxon>
        <taxon>Buthida</taxon>
        <taxon>Buthoidea</taxon>
        <taxon>Buthidae</taxon>
        <taxon>Tityus</taxon>
    </lineage>
</organism>
<keyword id="KW-0903">Direct protein sequencing</keyword>
<keyword id="KW-0964">Secreted</keyword>
<reference key="1">
    <citation type="journal article" date="2024" name="J. Nat. Prod.">
        <title>Profiling the linear peptides of venom from the Brazilian scorpion Tityus serrulatus: structural and functional characterization.</title>
        <authorList>
            <person name="Dias N.B."/>
            <person name="de Souza B.M."/>
            <person name="Cid-Alda F."/>
            <person name="Dorce V.A.C."/>
            <person name="Cocchi F.K."/>
            <person name="Palma M.S."/>
        </authorList>
    </citation>
    <scope>PROTEIN SEQUENCE</scope>
    <scope>IDENTIFICATION BY MASS SPECTROMETRY</scope>
    <scope>MASS SPECTROMETRY</scope>
    <scope>SUBCELLULAR LOCATION</scope>
    <scope>SYNTHESIS</scope>
    <scope>FUNCTION</scope>
    <scope>BIOASSAY</scope>
    <source>
        <tissue>Venom</tissue>
    </source>
</reference>
<protein>
    <recommendedName>
        <fullName evidence="2">Cryptide TyPep-15</fullName>
    </recommendedName>
</protein>
<feature type="peptide" id="PRO_0000461734" description="Cryptide TyPep-15" evidence="1">
    <location>
        <begin position="1"/>
        <end position="9"/>
    </location>
</feature>
<name>CRY15_TITSE</name>
<comment type="function">
    <text evidence="1">In vivo, causes moderate edema formation and moderate pain, when injected in mice hind paws.</text>
</comment>
<comment type="subcellular location">
    <subcellularLocation>
        <location evidence="1">Secreted</location>
    </subcellularLocation>
</comment>
<comment type="tissue specificity">
    <text evidence="3">Expressed by the venom gland.</text>
</comment>
<comment type="mass spectrometry" mass="725.4" method="Electrospray" evidence="1"/>